<keyword id="KW-0269">Exonuclease</keyword>
<keyword id="KW-0378">Hydrolase</keyword>
<keyword id="KW-0540">Nuclease</keyword>
<keyword id="KW-0539">Nucleus</keyword>
<keyword id="KW-1185">Reference proteome</keyword>
<keyword id="KW-0698">rRNA processing</keyword>
<proteinExistence type="inferred from homology"/>
<evidence type="ECO:0000250" key="1"/>
<evidence type="ECO:0000256" key="2">
    <source>
        <dbReference type="SAM" id="MobiDB-lite"/>
    </source>
</evidence>
<evidence type="ECO:0000305" key="3"/>
<name>REXO4_CANAL</name>
<reference key="1">
    <citation type="journal article" date="2004" name="Proc. Natl. Acad. Sci. U.S.A.">
        <title>The diploid genome sequence of Candida albicans.</title>
        <authorList>
            <person name="Jones T."/>
            <person name="Federspiel N.A."/>
            <person name="Chibana H."/>
            <person name="Dungan J."/>
            <person name="Kalman S."/>
            <person name="Magee B.B."/>
            <person name="Newport G."/>
            <person name="Thorstenson Y.R."/>
            <person name="Agabian N."/>
            <person name="Magee P.T."/>
            <person name="Davis R.W."/>
            <person name="Scherer S."/>
        </authorList>
    </citation>
    <scope>NUCLEOTIDE SEQUENCE [LARGE SCALE GENOMIC DNA]</scope>
    <source>
        <strain>SC5314 / ATCC MYA-2876</strain>
    </source>
</reference>
<reference key="2">
    <citation type="journal article" date="2007" name="Genome Biol.">
        <title>Assembly of the Candida albicans genome into sixteen supercontigs aligned on the eight chromosomes.</title>
        <authorList>
            <person name="van het Hoog M."/>
            <person name="Rast T.J."/>
            <person name="Martchenko M."/>
            <person name="Grindle S."/>
            <person name="Dignard D."/>
            <person name="Hogues H."/>
            <person name="Cuomo C."/>
            <person name="Berriman M."/>
            <person name="Scherer S."/>
            <person name="Magee B.B."/>
            <person name="Whiteway M."/>
            <person name="Chibana H."/>
            <person name="Nantel A."/>
            <person name="Magee P.T."/>
        </authorList>
    </citation>
    <scope>GENOME REANNOTATION</scope>
    <source>
        <strain>SC5314 / ATCC MYA-2876</strain>
    </source>
</reference>
<reference key="3">
    <citation type="journal article" date="2013" name="Genome Biol.">
        <title>Assembly of a phased diploid Candida albicans genome facilitates allele-specific measurements and provides a simple model for repeat and indel structure.</title>
        <authorList>
            <person name="Muzzey D."/>
            <person name="Schwartz K."/>
            <person name="Weissman J.S."/>
            <person name="Sherlock G."/>
        </authorList>
    </citation>
    <scope>NUCLEOTIDE SEQUENCE [LARGE SCALE GENOMIC DNA]</scope>
    <scope>GENOME REANNOTATION</scope>
    <source>
        <strain>SC5314 / ATCC MYA-2876</strain>
    </source>
</reference>
<sequence length="285" mass="32210">MAKLSQNWKKLSSKIQDKPKNGSVKKPTLKGKISKKVKASISEKLSTTNNTTTTTTTTTSTTDVVPIASSTKPTATPLEYTLWTQNHTINVSHIPKTPKPLPLSRNDSRKLDPGKYVAIDCEFVGIGKDGEESALARISIINYYGVVLLDTYVRPQERVTDWRTWVSGIQSYHMQDAIDFKTAQLKTMELINNKILVGHAVNNDLDILFLSHPKSMIRDTCKFPKFREIAGGKSPSLKKLIKHFIQVDIQIGQHSSVEDARATMLLFRLFKREIEQSMRNRNKRQ</sequence>
<feature type="chain" id="PRO_0000131692" description="RNA exonuclease 4">
    <location>
        <begin position="1"/>
        <end position="285"/>
    </location>
</feature>
<feature type="domain" description="Exonuclease">
    <location>
        <begin position="116"/>
        <end position="267"/>
    </location>
</feature>
<feature type="region of interest" description="Disordered" evidence="2">
    <location>
        <begin position="1"/>
        <end position="35"/>
    </location>
</feature>
<feature type="compositionally biased region" description="Polar residues" evidence="2">
    <location>
        <begin position="1"/>
        <end position="14"/>
    </location>
</feature>
<comment type="function">
    <text evidence="1">Exoribonuclease involved in ribosome biosynthesis. Involved in the processing of ITS1, the internal transcribed spacer localized between the 18S and 5.8S rRNAs (By similarity).</text>
</comment>
<comment type="subcellular location">
    <subcellularLocation>
        <location evidence="1">Nucleus</location>
    </subcellularLocation>
</comment>
<comment type="similarity">
    <text evidence="3">Belongs to the REXO4 family.</text>
</comment>
<gene>
    <name type="primary">REX4</name>
    <name type="ordered locus">CAALFM_C112440WA</name>
    <name type="ORF">CaO19.12687</name>
    <name type="ORF">CaO19.5220</name>
</gene>
<organism>
    <name type="scientific">Candida albicans (strain SC5314 / ATCC MYA-2876)</name>
    <name type="common">Yeast</name>
    <dbReference type="NCBI Taxonomy" id="237561"/>
    <lineage>
        <taxon>Eukaryota</taxon>
        <taxon>Fungi</taxon>
        <taxon>Dikarya</taxon>
        <taxon>Ascomycota</taxon>
        <taxon>Saccharomycotina</taxon>
        <taxon>Pichiomycetes</taxon>
        <taxon>Debaryomycetaceae</taxon>
        <taxon>Candida/Lodderomyces clade</taxon>
        <taxon>Candida</taxon>
    </lineage>
</organism>
<protein>
    <recommendedName>
        <fullName>RNA exonuclease 4</fullName>
        <ecNumber>3.1.-.-</ecNumber>
    </recommendedName>
</protein>
<dbReference type="EC" id="3.1.-.-"/>
<dbReference type="EMBL" id="CP017623">
    <property type="protein sequence ID" value="AOW26861.1"/>
    <property type="molecule type" value="Genomic_DNA"/>
</dbReference>
<dbReference type="RefSeq" id="XP_716289.1">
    <property type="nucleotide sequence ID" value="XM_711196.2"/>
</dbReference>
<dbReference type="SMR" id="Q5A3Q0"/>
<dbReference type="FunCoup" id="Q5A3Q0">
    <property type="interactions" value="841"/>
</dbReference>
<dbReference type="STRING" id="237561.Q5A3Q0"/>
<dbReference type="EnsemblFungi" id="C1_12440W_A-T">
    <property type="protein sequence ID" value="C1_12440W_A-T-p1"/>
    <property type="gene ID" value="C1_12440W_A"/>
</dbReference>
<dbReference type="GeneID" id="3642012"/>
<dbReference type="KEGG" id="cal:CAALFM_C112440WA"/>
<dbReference type="CGD" id="CAL0000191259">
    <property type="gene designation" value="orf19.12687"/>
</dbReference>
<dbReference type="VEuPathDB" id="FungiDB:C1_12440W_A"/>
<dbReference type="eggNOG" id="KOG2249">
    <property type="taxonomic scope" value="Eukaryota"/>
</dbReference>
<dbReference type="HOGENOM" id="CLU_022453_2_1_1"/>
<dbReference type="InParanoid" id="Q5A3Q0"/>
<dbReference type="OMA" id="RYKPLCK"/>
<dbReference type="OrthoDB" id="8191639at2759"/>
<dbReference type="PRO" id="PR:Q5A3Q0"/>
<dbReference type="Proteomes" id="UP000000559">
    <property type="component" value="Chromosome 1"/>
</dbReference>
<dbReference type="GO" id="GO:0005634">
    <property type="term" value="C:nucleus"/>
    <property type="evidence" value="ECO:0000318"/>
    <property type="project" value="GO_Central"/>
</dbReference>
<dbReference type="GO" id="GO:0008408">
    <property type="term" value="F:3'-5' exonuclease activity"/>
    <property type="evidence" value="ECO:0007669"/>
    <property type="project" value="InterPro"/>
</dbReference>
<dbReference type="GO" id="GO:0004527">
    <property type="term" value="F:exonuclease activity"/>
    <property type="evidence" value="ECO:0000318"/>
    <property type="project" value="GO_Central"/>
</dbReference>
<dbReference type="GO" id="GO:0003676">
    <property type="term" value="F:nucleic acid binding"/>
    <property type="evidence" value="ECO:0007669"/>
    <property type="project" value="InterPro"/>
</dbReference>
<dbReference type="GO" id="GO:0006396">
    <property type="term" value="P:RNA processing"/>
    <property type="evidence" value="ECO:0000318"/>
    <property type="project" value="GO_Central"/>
</dbReference>
<dbReference type="GO" id="GO:0006364">
    <property type="term" value="P:rRNA processing"/>
    <property type="evidence" value="ECO:0007669"/>
    <property type="project" value="UniProtKB-KW"/>
</dbReference>
<dbReference type="CDD" id="cd06144">
    <property type="entry name" value="REX4_like"/>
    <property type="match status" value="1"/>
</dbReference>
<dbReference type="FunFam" id="3.30.420.10:FF:000007">
    <property type="entry name" value="Interferon-stimulated exonuclease gene 20"/>
    <property type="match status" value="1"/>
</dbReference>
<dbReference type="Gene3D" id="3.30.420.10">
    <property type="entry name" value="Ribonuclease H-like superfamily/Ribonuclease H"/>
    <property type="match status" value="1"/>
</dbReference>
<dbReference type="InterPro" id="IPR013520">
    <property type="entry name" value="Exonuclease_RNaseT/DNA_pol3"/>
</dbReference>
<dbReference type="InterPro" id="IPR037431">
    <property type="entry name" value="REX4_DEDDh_dom"/>
</dbReference>
<dbReference type="InterPro" id="IPR047021">
    <property type="entry name" value="REXO1/3/4-like"/>
</dbReference>
<dbReference type="InterPro" id="IPR012337">
    <property type="entry name" value="RNaseH-like_sf"/>
</dbReference>
<dbReference type="InterPro" id="IPR036397">
    <property type="entry name" value="RNaseH_sf"/>
</dbReference>
<dbReference type="PANTHER" id="PTHR12801:SF45">
    <property type="entry name" value="RNA EXONUCLEASE 4"/>
    <property type="match status" value="1"/>
</dbReference>
<dbReference type="PANTHER" id="PTHR12801">
    <property type="entry name" value="RNA EXONUCLEASE REXO1 / RECO3 FAMILY MEMBER-RELATED"/>
    <property type="match status" value="1"/>
</dbReference>
<dbReference type="Pfam" id="PF00929">
    <property type="entry name" value="RNase_T"/>
    <property type="match status" value="1"/>
</dbReference>
<dbReference type="SMART" id="SM00479">
    <property type="entry name" value="EXOIII"/>
    <property type="match status" value="1"/>
</dbReference>
<dbReference type="SUPFAM" id="SSF53098">
    <property type="entry name" value="Ribonuclease H-like"/>
    <property type="match status" value="1"/>
</dbReference>
<accession>Q5A3Q0</accession>
<accession>A0A1D8PFD2</accession>